<name>DNLJ_SHEON</name>
<sequence length="689" mass="75338">MQDIQLDKRLSELLSQAVTPQTAQPLMQALSQSLNEHNIRYYVDDAPSITDSEYDRLMQQLKKLEAEYPQFVLADSPTQRVGGLALAKFEQITHLKPMLSLDNAFDEADFTAFHKRVSDRVGQVSFCCEPKLDGLAVSILYRNGVLERAATRGDGTVGEDITENVKTIKSIPLRLRGNNYPELVEVRGEAFMPKAAFEALNERARLKDDKQFVNPRNAAAGSLRQLDSKITASRALSFYAYALGVVEPSSHELAKTHYEQLQQLKSWGLPVSSEIKVCDELNQVFAYYKDILTRRSDLPFEIDGVVMKVNDIAQQQTLGFVAKSPRWAIAYKFPAQEEMTLLEGVDFQVGRTGAVTPVARLKPVFVGGVTVSNATLHNADEIERLGVMVGDTVIIRRAGDVIPQIVAIVPERRSEDAQAIVFPQHCPVCGSLVERLEGEAVARCSGGLFCEAQRKEAIKHFASRKALDIDGMGDKIVEQLIDKELVQSPADLFKLTASMMTMLDRMGMKSATNLALAIEAAKTTTLPRFLYALGIREVGEATAANLAAHFGSLDALRIATIEQLIEVEDIGEVVAQHVAHFFAQPHNLEVIDALIAAGVNWPAIEAPSADEQPLKGQTWVLTGTLNQLNRNDAKAQLQVLGAKVAGSVSKNTDCLVAGEAAGSKLAKAQELGVKVIGEDELLALLAANR</sequence>
<comment type="function">
    <text evidence="1">DNA ligase that catalyzes the formation of phosphodiester linkages between 5'-phosphoryl and 3'-hydroxyl groups in double-stranded DNA using NAD as a coenzyme and as the energy source for the reaction. It is essential for DNA replication and repair of damaged DNA.</text>
</comment>
<comment type="catalytic activity">
    <reaction evidence="1">
        <text>NAD(+) + (deoxyribonucleotide)n-3'-hydroxyl + 5'-phospho-(deoxyribonucleotide)m = (deoxyribonucleotide)n+m + AMP + beta-nicotinamide D-nucleotide.</text>
        <dbReference type="EC" id="6.5.1.2"/>
    </reaction>
</comment>
<comment type="cofactor">
    <cofactor evidence="1">
        <name>Mg(2+)</name>
        <dbReference type="ChEBI" id="CHEBI:18420"/>
    </cofactor>
    <cofactor evidence="1">
        <name>Mn(2+)</name>
        <dbReference type="ChEBI" id="CHEBI:29035"/>
    </cofactor>
</comment>
<comment type="similarity">
    <text evidence="1">Belongs to the NAD-dependent DNA ligase family. LigA subfamily.</text>
</comment>
<keyword id="KW-0227">DNA damage</keyword>
<keyword id="KW-0234">DNA repair</keyword>
<keyword id="KW-0235">DNA replication</keyword>
<keyword id="KW-0436">Ligase</keyword>
<keyword id="KW-0460">Magnesium</keyword>
<keyword id="KW-0464">Manganese</keyword>
<keyword id="KW-0479">Metal-binding</keyword>
<keyword id="KW-0520">NAD</keyword>
<keyword id="KW-1185">Reference proteome</keyword>
<keyword id="KW-0862">Zinc</keyword>
<dbReference type="EC" id="6.5.1.2" evidence="1"/>
<dbReference type="EMBL" id="AE014299">
    <property type="protein sequence ID" value="AAN55912.1"/>
    <property type="molecule type" value="Genomic_DNA"/>
</dbReference>
<dbReference type="RefSeq" id="NP_718468.1">
    <property type="nucleotide sequence ID" value="NC_004347.2"/>
</dbReference>
<dbReference type="RefSeq" id="WP_011072805.1">
    <property type="nucleotide sequence ID" value="NC_004347.2"/>
</dbReference>
<dbReference type="SMR" id="Q8ED70"/>
<dbReference type="STRING" id="211586.SO_2896"/>
<dbReference type="PaxDb" id="211586-SO_2896"/>
<dbReference type="KEGG" id="son:SO_2896"/>
<dbReference type="PATRIC" id="fig|211586.12.peg.2794"/>
<dbReference type="eggNOG" id="COG0272">
    <property type="taxonomic scope" value="Bacteria"/>
</dbReference>
<dbReference type="HOGENOM" id="CLU_007764_2_1_6"/>
<dbReference type="OrthoDB" id="9759736at2"/>
<dbReference type="PhylomeDB" id="Q8ED70"/>
<dbReference type="BioCyc" id="SONE211586:G1GMP-2672-MONOMER"/>
<dbReference type="Proteomes" id="UP000008186">
    <property type="component" value="Chromosome"/>
</dbReference>
<dbReference type="GO" id="GO:0005829">
    <property type="term" value="C:cytosol"/>
    <property type="evidence" value="ECO:0000318"/>
    <property type="project" value="GO_Central"/>
</dbReference>
<dbReference type="GO" id="GO:0003677">
    <property type="term" value="F:DNA binding"/>
    <property type="evidence" value="ECO:0007669"/>
    <property type="project" value="InterPro"/>
</dbReference>
<dbReference type="GO" id="GO:0003911">
    <property type="term" value="F:DNA ligase (NAD+) activity"/>
    <property type="evidence" value="ECO:0000318"/>
    <property type="project" value="GO_Central"/>
</dbReference>
<dbReference type="GO" id="GO:0046872">
    <property type="term" value="F:metal ion binding"/>
    <property type="evidence" value="ECO:0007669"/>
    <property type="project" value="UniProtKB-KW"/>
</dbReference>
<dbReference type="GO" id="GO:0006281">
    <property type="term" value="P:DNA repair"/>
    <property type="evidence" value="ECO:0007669"/>
    <property type="project" value="UniProtKB-KW"/>
</dbReference>
<dbReference type="GO" id="GO:0006260">
    <property type="term" value="P:DNA replication"/>
    <property type="evidence" value="ECO:0007669"/>
    <property type="project" value="UniProtKB-KW"/>
</dbReference>
<dbReference type="CDD" id="cd17748">
    <property type="entry name" value="BRCT_DNA_ligase_like"/>
    <property type="match status" value="1"/>
</dbReference>
<dbReference type="CDD" id="cd00114">
    <property type="entry name" value="LIGANc"/>
    <property type="match status" value="1"/>
</dbReference>
<dbReference type="FunFam" id="1.10.150.20:FF:000006">
    <property type="entry name" value="DNA ligase"/>
    <property type="match status" value="1"/>
</dbReference>
<dbReference type="FunFam" id="1.10.150.20:FF:000007">
    <property type="entry name" value="DNA ligase"/>
    <property type="match status" value="1"/>
</dbReference>
<dbReference type="FunFam" id="1.10.287.610:FF:000002">
    <property type="entry name" value="DNA ligase"/>
    <property type="match status" value="1"/>
</dbReference>
<dbReference type="FunFam" id="2.40.50.140:FF:000012">
    <property type="entry name" value="DNA ligase"/>
    <property type="match status" value="1"/>
</dbReference>
<dbReference type="FunFam" id="3.30.470.30:FF:000001">
    <property type="entry name" value="DNA ligase"/>
    <property type="match status" value="1"/>
</dbReference>
<dbReference type="FunFam" id="6.20.10.30:FF:000001">
    <property type="entry name" value="DNA ligase"/>
    <property type="match status" value="1"/>
</dbReference>
<dbReference type="Gene3D" id="6.20.10.30">
    <property type="match status" value="1"/>
</dbReference>
<dbReference type="Gene3D" id="1.10.150.20">
    <property type="entry name" value="5' to 3' exonuclease, C-terminal subdomain"/>
    <property type="match status" value="2"/>
</dbReference>
<dbReference type="Gene3D" id="3.40.50.10190">
    <property type="entry name" value="BRCT domain"/>
    <property type="match status" value="1"/>
</dbReference>
<dbReference type="Gene3D" id="3.30.470.30">
    <property type="entry name" value="DNA ligase/mRNA capping enzyme"/>
    <property type="match status" value="1"/>
</dbReference>
<dbReference type="Gene3D" id="1.10.287.610">
    <property type="entry name" value="Helix hairpin bin"/>
    <property type="match status" value="1"/>
</dbReference>
<dbReference type="Gene3D" id="2.40.50.140">
    <property type="entry name" value="Nucleic acid-binding proteins"/>
    <property type="match status" value="1"/>
</dbReference>
<dbReference type="HAMAP" id="MF_01588">
    <property type="entry name" value="DNA_ligase_A"/>
    <property type="match status" value="1"/>
</dbReference>
<dbReference type="InterPro" id="IPR001357">
    <property type="entry name" value="BRCT_dom"/>
</dbReference>
<dbReference type="InterPro" id="IPR036420">
    <property type="entry name" value="BRCT_dom_sf"/>
</dbReference>
<dbReference type="InterPro" id="IPR041663">
    <property type="entry name" value="DisA/LigA_HHH"/>
</dbReference>
<dbReference type="InterPro" id="IPR001679">
    <property type="entry name" value="DNA_ligase"/>
</dbReference>
<dbReference type="InterPro" id="IPR018239">
    <property type="entry name" value="DNA_ligase_AS"/>
</dbReference>
<dbReference type="InterPro" id="IPR033136">
    <property type="entry name" value="DNA_ligase_CS"/>
</dbReference>
<dbReference type="InterPro" id="IPR013839">
    <property type="entry name" value="DNAligase_adenylation"/>
</dbReference>
<dbReference type="InterPro" id="IPR013840">
    <property type="entry name" value="DNAligase_N"/>
</dbReference>
<dbReference type="InterPro" id="IPR003583">
    <property type="entry name" value="Hlx-hairpin-Hlx_DNA-bd_motif"/>
</dbReference>
<dbReference type="InterPro" id="IPR012340">
    <property type="entry name" value="NA-bd_OB-fold"/>
</dbReference>
<dbReference type="InterPro" id="IPR004150">
    <property type="entry name" value="NAD_DNA_ligase_OB"/>
</dbReference>
<dbReference type="InterPro" id="IPR010994">
    <property type="entry name" value="RuvA_2-like"/>
</dbReference>
<dbReference type="InterPro" id="IPR004149">
    <property type="entry name" value="Znf_DNAligase_C4"/>
</dbReference>
<dbReference type="NCBIfam" id="TIGR00575">
    <property type="entry name" value="dnlj"/>
    <property type="match status" value="1"/>
</dbReference>
<dbReference type="NCBIfam" id="NF005932">
    <property type="entry name" value="PRK07956.1"/>
    <property type="match status" value="1"/>
</dbReference>
<dbReference type="PANTHER" id="PTHR23389">
    <property type="entry name" value="CHROMOSOME TRANSMISSION FIDELITY FACTOR 18"/>
    <property type="match status" value="1"/>
</dbReference>
<dbReference type="PANTHER" id="PTHR23389:SF9">
    <property type="entry name" value="DNA LIGASE"/>
    <property type="match status" value="1"/>
</dbReference>
<dbReference type="Pfam" id="PF00533">
    <property type="entry name" value="BRCT"/>
    <property type="match status" value="1"/>
</dbReference>
<dbReference type="Pfam" id="PF01653">
    <property type="entry name" value="DNA_ligase_aden"/>
    <property type="match status" value="1"/>
</dbReference>
<dbReference type="Pfam" id="PF03120">
    <property type="entry name" value="DNA_ligase_OB"/>
    <property type="match status" value="1"/>
</dbReference>
<dbReference type="Pfam" id="PF03119">
    <property type="entry name" value="DNA_ligase_ZBD"/>
    <property type="match status" value="1"/>
</dbReference>
<dbReference type="Pfam" id="PF12826">
    <property type="entry name" value="HHH_2"/>
    <property type="match status" value="1"/>
</dbReference>
<dbReference type="Pfam" id="PF14520">
    <property type="entry name" value="HHH_5"/>
    <property type="match status" value="1"/>
</dbReference>
<dbReference type="Pfam" id="PF22745">
    <property type="entry name" value="Nlig-Ia"/>
    <property type="match status" value="1"/>
</dbReference>
<dbReference type="PIRSF" id="PIRSF001604">
    <property type="entry name" value="LigA"/>
    <property type="match status" value="1"/>
</dbReference>
<dbReference type="SMART" id="SM00292">
    <property type="entry name" value="BRCT"/>
    <property type="match status" value="1"/>
</dbReference>
<dbReference type="SMART" id="SM00278">
    <property type="entry name" value="HhH1"/>
    <property type="match status" value="3"/>
</dbReference>
<dbReference type="SMART" id="SM00532">
    <property type="entry name" value="LIGANc"/>
    <property type="match status" value="1"/>
</dbReference>
<dbReference type="SUPFAM" id="SSF52113">
    <property type="entry name" value="BRCT domain"/>
    <property type="match status" value="1"/>
</dbReference>
<dbReference type="SUPFAM" id="SSF56091">
    <property type="entry name" value="DNA ligase/mRNA capping enzyme, catalytic domain"/>
    <property type="match status" value="1"/>
</dbReference>
<dbReference type="SUPFAM" id="SSF50249">
    <property type="entry name" value="Nucleic acid-binding proteins"/>
    <property type="match status" value="1"/>
</dbReference>
<dbReference type="SUPFAM" id="SSF47781">
    <property type="entry name" value="RuvA domain 2-like"/>
    <property type="match status" value="1"/>
</dbReference>
<dbReference type="PROSITE" id="PS50172">
    <property type="entry name" value="BRCT"/>
    <property type="match status" value="1"/>
</dbReference>
<dbReference type="PROSITE" id="PS01055">
    <property type="entry name" value="DNA_LIGASE_N1"/>
    <property type="match status" value="1"/>
</dbReference>
<dbReference type="PROSITE" id="PS01056">
    <property type="entry name" value="DNA_LIGASE_N2"/>
    <property type="match status" value="1"/>
</dbReference>
<reference key="1">
    <citation type="journal article" date="2002" name="Nat. Biotechnol.">
        <title>Genome sequence of the dissimilatory metal ion-reducing bacterium Shewanella oneidensis.</title>
        <authorList>
            <person name="Heidelberg J.F."/>
            <person name="Paulsen I.T."/>
            <person name="Nelson K.E."/>
            <person name="Gaidos E.J."/>
            <person name="Nelson W.C."/>
            <person name="Read T.D."/>
            <person name="Eisen J.A."/>
            <person name="Seshadri R."/>
            <person name="Ward N.L."/>
            <person name="Methe B.A."/>
            <person name="Clayton R.A."/>
            <person name="Meyer T."/>
            <person name="Tsapin A."/>
            <person name="Scott J."/>
            <person name="Beanan M.J."/>
            <person name="Brinkac L.M."/>
            <person name="Daugherty S.C."/>
            <person name="DeBoy R.T."/>
            <person name="Dodson R.J."/>
            <person name="Durkin A.S."/>
            <person name="Haft D.H."/>
            <person name="Kolonay J.F."/>
            <person name="Madupu R."/>
            <person name="Peterson J.D."/>
            <person name="Umayam L.A."/>
            <person name="White O."/>
            <person name="Wolf A.M."/>
            <person name="Vamathevan J.J."/>
            <person name="Weidman J.F."/>
            <person name="Impraim M."/>
            <person name="Lee K."/>
            <person name="Berry K.J."/>
            <person name="Lee C."/>
            <person name="Mueller J."/>
            <person name="Khouri H.M."/>
            <person name="Gill J."/>
            <person name="Utterback T.R."/>
            <person name="McDonald L.A."/>
            <person name="Feldblyum T.V."/>
            <person name="Smith H.O."/>
            <person name="Venter J.C."/>
            <person name="Nealson K.H."/>
            <person name="Fraser C.M."/>
        </authorList>
    </citation>
    <scope>NUCLEOTIDE SEQUENCE [LARGE SCALE GENOMIC DNA]</scope>
    <source>
        <strain>ATCC 700550 / JCM 31522 / CIP 106686 / LMG 19005 / NCIMB 14063 / MR-1</strain>
    </source>
</reference>
<gene>
    <name evidence="1" type="primary">ligA</name>
    <name type="ordered locus">SO_2896</name>
</gene>
<accession>Q8ED70</accession>
<feature type="chain" id="PRO_0000313428" description="DNA ligase">
    <location>
        <begin position="1"/>
        <end position="689"/>
    </location>
</feature>
<feature type="domain" description="BRCT" evidence="1">
    <location>
        <begin position="609"/>
        <end position="689"/>
    </location>
</feature>
<feature type="active site" description="N6-AMP-lysine intermediate" evidence="1">
    <location>
        <position position="131"/>
    </location>
</feature>
<feature type="binding site" evidence="1">
    <location>
        <begin position="51"/>
        <end position="55"/>
    </location>
    <ligand>
        <name>NAD(+)</name>
        <dbReference type="ChEBI" id="CHEBI:57540"/>
    </ligand>
</feature>
<feature type="binding site" evidence="1">
    <location>
        <begin position="100"/>
        <end position="101"/>
    </location>
    <ligand>
        <name>NAD(+)</name>
        <dbReference type="ChEBI" id="CHEBI:57540"/>
    </ligand>
</feature>
<feature type="binding site" evidence="1">
    <location>
        <position position="129"/>
    </location>
    <ligand>
        <name>NAD(+)</name>
        <dbReference type="ChEBI" id="CHEBI:57540"/>
    </ligand>
</feature>
<feature type="binding site" evidence="1">
    <location>
        <position position="152"/>
    </location>
    <ligand>
        <name>NAD(+)</name>
        <dbReference type="ChEBI" id="CHEBI:57540"/>
    </ligand>
</feature>
<feature type="binding site" evidence="1">
    <location>
        <position position="189"/>
    </location>
    <ligand>
        <name>NAD(+)</name>
        <dbReference type="ChEBI" id="CHEBI:57540"/>
    </ligand>
</feature>
<feature type="binding site" evidence="1">
    <location>
        <position position="308"/>
    </location>
    <ligand>
        <name>NAD(+)</name>
        <dbReference type="ChEBI" id="CHEBI:57540"/>
    </ligand>
</feature>
<feature type="binding site" evidence="1">
    <location>
        <position position="332"/>
    </location>
    <ligand>
        <name>NAD(+)</name>
        <dbReference type="ChEBI" id="CHEBI:57540"/>
    </ligand>
</feature>
<feature type="binding site" evidence="1">
    <location>
        <position position="426"/>
    </location>
    <ligand>
        <name>Zn(2+)</name>
        <dbReference type="ChEBI" id="CHEBI:29105"/>
    </ligand>
</feature>
<feature type="binding site" evidence="1">
    <location>
        <position position="429"/>
    </location>
    <ligand>
        <name>Zn(2+)</name>
        <dbReference type="ChEBI" id="CHEBI:29105"/>
    </ligand>
</feature>
<feature type="binding site" evidence="1">
    <location>
        <position position="444"/>
    </location>
    <ligand>
        <name>Zn(2+)</name>
        <dbReference type="ChEBI" id="CHEBI:29105"/>
    </ligand>
</feature>
<feature type="binding site" evidence="1">
    <location>
        <position position="450"/>
    </location>
    <ligand>
        <name>Zn(2+)</name>
        <dbReference type="ChEBI" id="CHEBI:29105"/>
    </ligand>
</feature>
<organism>
    <name type="scientific">Shewanella oneidensis (strain ATCC 700550 / JCM 31522 / CIP 106686 / LMG 19005 / NCIMB 14063 / MR-1)</name>
    <dbReference type="NCBI Taxonomy" id="211586"/>
    <lineage>
        <taxon>Bacteria</taxon>
        <taxon>Pseudomonadati</taxon>
        <taxon>Pseudomonadota</taxon>
        <taxon>Gammaproteobacteria</taxon>
        <taxon>Alteromonadales</taxon>
        <taxon>Shewanellaceae</taxon>
        <taxon>Shewanella</taxon>
    </lineage>
</organism>
<protein>
    <recommendedName>
        <fullName evidence="1">DNA ligase</fullName>
        <ecNumber evidence="1">6.5.1.2</ecNumber>
    </recommendedName>
    <alternativeName>
        <fullName evidence="1">Polydeoxyribonucleotide synthase [NAD(+)]</fullName>
    </alternativeName>
</protein>
<proteinExistence type="inferred from homology"/>
<evidence type="ECO:0000255" key="1">
    <source>
        <dbReference type="HAMAP-Rule" id="MF_01588"/>
    </source>
</evidence>